<evidence type="ECO:0000255" key="1">
    <source>
        <dbReference type="HAMAP-Rule" id="MF_00544"/>
    </source>
</evidence>
<organism>
    <name type="scientific">Halobacterium salinarum (strain ATCC 29341 / DSM 671 / R1)</name>
    <dbReference type="NCBI Taxonomy" id="478009"/>
    <lineage>
        <taxon>Archaea</taxon>
        <taxon>Methanobacteriati</taxon>
        <taxon>Methanobacteriota</taxon>
        <taxon>Stenosarchaea group</taxon>
        <taxon>Halobacteria</taxon>
        <taxon>Halobacteriales</taxon>
        <taxon>Halobacteriaceae</taxon>
        <taxon>Halobacterium</taxon>
        <taxon>Halobacterium salinarum NRC-34001</taxon>
    </lineage>
</organism>
<reference key="1">
    <citation type="journal article" date="2008" name="Genomics">
        <title>Evolution in the laboratory: the genome of Halobacterium salinarum strain R1 compared to that of strain NRC-1.</title>
        <authorList>
            <person name="Pfeiffer F."/>
            <person name="Schuster S.C."/>
            <person name="Broicher A."/>
            <person name="Falb M."/>
            <person name="Palm P."/>
            <person name="Rodewald K."/>
            <person name="Ruepp A."/>
            <person name="Soppa J."/>
            <person name="Tittor J."/>
            <person name="Oesterhelt D."/>
        </authorList>
    </citation>
    <scope>NUCLEOTIDE SEQUENCE [LARGE SCALE GENOMIC DNA]</scope>
    <source>
        <strain>ATCC 29341 / DSM 671 / R1</strain>
    </source>
</reference>
<keyword id="KW-0456">Lyase</keyword>
<keyword id="KW-0663">Pyridoxal phosphate</keyword>
<keyword id="KW-0823">Tryptophan catabolism</keyword>
<protein>
    <recommendedName>
        <fullName evidence="1">Probable tryptophanase</fullName>
        <ecNumber evidence="1">4.1.99.1</ecNumber>
    </recommendedName>
    <alternativeName>
        <fullName evidence="1">L-tryptophan indole-lyase</fullName>
        <shortName evidence="1">TNase</shortName>
    </alternativeName>
</protein>
<comment type="catalytic activity">
    <reaction evidence="1">
        <text>L-tryptophan + H2O = indole + pyruvate + NH4(+)</text>
        <dbReference type="Rhea" id="RHEA:19553"/>
        <dbReference type="ChEBI" id="CHEBI:15361"/>
        <dbReference type="ChEBI" id="CHEBI:15377"/>
        <dbReference type="ChEBI" id="CHEBI:16881"/>
        <dbReference type="ChEBI" id="CHEBI:28938"/>
        <dbReference type="ChEBI" id="CHEBI:57912"/>
        <dbReference type="EC" id="4.1.99.1"/>
    </reaction>
</comment>
<comment type="cofactor">
    <cofactor evidence="1">
        <name>pyridoxal 5'-phosphate</name>
        <dbReference type="ChEBI" id="CHEBI:597326"/>
    </cofactor>
</comment>
<comment type="pathway">
    <text evidence="1">Amino-acid degradation; L-tryptophan degradation via pyruvate pathway; indole and pyruvate from L-tryptophan: step 1/1.</text>
</comment>
<comment type="similarity">
    <text evidence="1">Belongs to the beta-eliminating lyase family.</text>
</comment>
<proteinExistence type="inferred from homology"/>
<gene>
    <name evidence="1" type="primary">tnaA</name>
    <name type="ordered locus">OE_4331R</name>
</gene>
<dbReference type="EC" id="4.1.99.1" evidence="1"/>
<dbReference type="EMBL" id="AM774415">
    <property type="protein sequence ID" value="CAP14775.1"/>
    <property type="molecule type" value="Genomic_DNA"/>
</dbReference>
<dbReference type="RefSeq" id="WP_012289493.1">
    <property type="nucleotide sequence ID" value="NC_010364.1"/>
</dbReference>
<dbReference type="SMR" id="B0R7Q6"/>
<dbReference type="EnsemblBacteria" id="CAP14775">
    <property type="protein sequence ID" value="CAP14775"/>
    <property type="gene ID" value="OE_4331R"/>
</dbReference>
<dbReference type="KEGG" id="hsl:OE_4331R"/>
<dbReference type="HOGENOM" id="CLU_047223_0_0_2"/>
<dbReference type="PhylomeDB" id="B0R7Q6"/>
<dbReference type="UniPathway" id="UPA00332">
    <property type="reaction ID" value="UER00452"/>
</dbReference>
<dbReference type="Proteomes" id="UP000001321">
    <property type="component" value="Chromosome"/>
</dbReference>
<dbReference type="GO" id="GO:0009034">
    <property type="term" value="F:tryptophanase activity"/>
    <property type="evidence" value="ECO:0007669"/>
    <property type="project" value="UniProtKB-UniRule"/>
</dbReference>
<dbReference type="CDD" id="cd00617">
    <property type="entry name" value="Tnase_like"/>
    <property type="match status" value="1"/>
</dbReference>
<dbReference type="Gene3D" id="3.90.1150.10">
    <property type="entry name" value="Aspartate Aminotransferase, domain 1"/>
    <property type="match status" value="1"/>
</dbReference>
<dbReference type="Gene3D" id="3.40.640.10">
    <property type="entry name" value="Type I PLP-dependent aspartate aminotransferase-like (Major domain)"/>
    <property type="match status" value="1"/>
</dbReference>
<dbReference type="HAMAP" id="MF_00544">
    <property type="entry name" value="Tryptophanase"/>
    <property type="match status" value="1"/>
</dbReference>
<dbReference type="InterPro" id="IPR001597">
    <property type="entry name" value="ArAA_b-elim_lyase/Thr_aldolase"/>
</dbReference>
<dbReference type="InterPro" id="IPR011166">
    <property type="entry name" value="Beta-eliminating_lyase"/>
</dbReference>
<dbReference type="InterPro" id="IPR015424">
    <property type="entry name" value="PyrdxlP-dep_Trfase"/>
</dbReference>
<dbReference type="InterPro" id="IPR015421">
    <property type="entry name" value="PyrdxlP-dep_Trfase_major"/>
</dbReference>
<dbReference type="InterPro" id="IPR015422">
    <property type="entry name" value="PyrdxlP-dep_Trfase_small"/>
</dbReference>
<dbReference type="InterPro" id="IPR013440">
    <property type="entry name" value="TNase"/>
</dbReference>
<dbReference type="InterPro" id="IPR018176">
    <property type="entry name" value="Tryptophanase_CS"/>
</dbReference>
<dbReference type="NCBIfam" id="NF009709">
    <property type="entry name" value="PRK13238.1"/>
    <property type="match status" value="1"/>
</dbReference>
<dbReference type="PANTHER" id="PTHR32325">
    <property type="entry name" value="BETA-ELIMINATING LYASE-LIKE PROTEIN-RELATED"/>
    <property type="match status" value="1"/>
</dbReference>
<dbReference type="PANTHER" id="PTHR32325:SF4">
    <property type="entry name" value="TRYPTOPHANASE"/>
    <property type="match status" value="1"/>
</dbReference>
<dbReference type="Pfam" id="PF01212">
    <property type="entry name" value="Beta_elim_lyase"/>
    <property type="match status" value="1"/>
</dbReference>
<dbReference type="PIRSF" id="PIRSF001386">
    <property type="entry name" value="Trpase"/>
    <property type="match status" value="1"/>
</dbReference>
<dbReference type="SUPFAM" id="SSF53383">
    <property type="entry name" value="PLP-dependent transferases"/>
    <property type="match status" value="1"/>
</dbReference>
<dbReference type="PROSITE" id="PS00853">
    <property type="entry name" value="BETA_ELIM_LYASE"/>
    <property type="match status" value="1"/>
</dbReference>
<sequence>MRSHTATMVDRIEDTSRADREAALADAGHNVFELASDDVAVDLLTDSGTGTMSNDQWAAMLQGDEAYAGSASFEDLAVAAEDVMGFQHIIPAHQGRGAENVLYGAVLSAGDTVLNNAHFDTTRAHVAANDATPVDCPVDGARDPDTDAPFKGNFSVERARRVVDDVGADAVPVVVLTITNNSMAGQPVSIENTREVAAFADDIDATFVIDACRFAENAHFVQQREPGYEHDSVAAIAREQLSYADACVMSGKKDGLVNVGGFVGLHDDGRLHEQCRQRGILYEGFSTYGGMSGRDMAAFAVGLREAVEPPYVAERVAQVQRLADALTDRDVPIYQPAGGHAVYIDANAALPHLPREQFPGQAFVCELYREGGVRAVELGRFAFPDTDRRDLVRLALPRRTYGPDHLDHVADTAAAVCERGTDVTGLEIVSEPELTELRHFSAALQPVA</sequence>
<name>TNAA_HALS3</name>
<accession>B0R7Q6</accession>
<feature type="chain" id="PRO_1000128915" description="Probable tryptophanase">
    <location>
        <begin position="1"/>
        <end position="448"/>
    </location>
</feature>
<feature type="modified residue" description="N6-(pyridoxal phosphate)lysine" evidence="1">
    <location>
        <position position="253"/>
    </location>
</feature>